<sequence>MSHIRVAFAPLDTNPSTCGLETFATQIETLSQMMTAEEMKAELYDCVRRILREQKFDQIRENEAMLRLYKVMGRSSTNLKGRGIYEQLFKKDHFTGSLKFYLQWAEECGKDQMLEEFKDVLKLARDRLSERIEMTAIESGFRDLVDEYFNGESGDMFTRPDETMDLFRFNAGSKKKRRSSVCFLQHNVPINNSGKAAFGPKTKTDLRQACIDRPNYHGISIEEFRFAKWKDTFGEDVDDDYRKRKDSGVVFVKHQVIDTDRQAREEVENRFNANLNPRRRHLSPVSEKTVDDEEEKRSRIYSPLVATKDAHRPALRSKIENPPATVTLSSDTKSASEKDVSDSDDADDDERLKIMTAGRKDGNPPDRSTSISSNYSTASARTSKSGAGLDLMAENKCLEAHAMFSDTVHLASEKTMVLGDDSVFVPERSLATTQIVTDFSVLCDPDPTMTITQERPKKVSNGLNVVYDEAAEPEESQKVEESEVQPEIVLVSPVTQTSPATMFNDIYDDEIEFGFFKPSRGNFVTSTPAQGVHLVNIDEYFGNKEEESTHEQEAPVFVAPTSSTFSKLTRRKSLAANQAVQPSVTESSKPERSDPKDSSIDCLTANLGRRLSIGADEIPNLTENNESEITGCKIRRRSEIIKQGDINPWDETLRKKLMCLVRPPQNMHEFQERAPKIQALRDCEVSGEKLHIQTLIGQGGYAKVYRAVTDDQRTVAVKYEVPSCSWEVYICDQMRNRLKDRGLELMAKCCIMEVMDAYVYSTASLLVNQYHEYGTLLEYANNMKDPNWHITCFLITQMARVVKEVHASKIIHGDIKPDNFMITRKIDDKWGKDALMSNDSFVIKIIDWGRAIDMMPLKNQRFKGRAGTEAFDCPEMVDGRSWTYQADYFGFAATMAVVVAGKYAQLTGASVGDYSLNVDIKRRNILRDACYDVINRFLNIPSCDSLPDWNILIKSFSEIWNEKFEASGWRQAVSKFNEACDLAANQK</sequence>
<reference evidence="16" key="1">
    <citation type="journal article" date="1998" name="Science">
        <title>Genome sequence of the nematode C. elegans: a platform for investigating biology.</title>
        <authorList>
            <consortium name="The C. elegans sequencing consortium"/>
        </authorList>
    </citation>
    <scope>NUCLEOTIDE SEQUENCE [LARGE SCALE GENOMIC DNA]</scope>
    <source>
        <strain evidence="16">Bristol N2</strain>
    </source>
</reference>
<reference evidence="14" key="2">
    <citation type="journal article" date="2001" name="J. Cell Biol.">
        <title>Functional analysis of kinetochore assembly in Caenorhabditis elegans.</title>
        <authorList>
            <person name="Oegema K."/>
            <person name="Desai A."/>
            <person name="Rybina S."/>
            <person name="Kirkham M."/>
            <person name="Hyman A.A."/>
        </authorList>
    </citation>
    <scope>SUBCELLULAR LOCATION</scope>
</reference>
<reference key="3">
    <citation type="journal article" date="2007" name="J. Cell Biol.">
        <title>Functional genomics identifies a Myb domain-containing protein family required for assembly of CENP-A chromatin.</title>
        <authorList>
            <person name="Maddox P.S."/>
            <person name="Hyndman F."/>
            <person name="Monen J."/>
            <person name="Oegema K."/>
            <person name="Desai A."/>
        </authorList>
    </citation>
    <scope>SUBCELLULAR LOCATION</scope>
</reference>
<reference key="4">
    <citation type="journal article" date="2008" name="Genes Dev.">
        <title>A new mechanism controlling kinetochore-microtubule interactions revealed by comparison of two dynein-targeting components: SPDL-1 and the Rod/Zwilch/Zw10 complex.</title>
        <authorList>
            <person name="Gassmann R."/>
            <person name="Essex A."/>
            <person name="Hu J.-S."/>
            <person name="Maddox P.S."/>
            <person name="Motegi F."/>
            <person name="Sugimoto A."/>
            <person name="O'Rourke S.M."/>
            <person name="Bowerman B."/>
            <person name="McLeod I."/>
            <person name="Yates J.R. III"/>
            <person name="Oegema K."/>
            <person name="Cheeseman I.M."/>
            <person name="Desai A."/>
        </authorList>
    </citation>
    <scope>FUNCTION</scope>
    <scope>SUBCELLULAR LOCATION</scope>
    <scope>DISRUPTION PHENOTYPE</scope>
</reference>
<reference key="5">
    <citation type="journal article" date="2008" name="J. Cell Biol.">
        <title>SPDL-1 functions as a kinetochore receptor for MDF-1 in Caenorhabditis elegans.</title>
        <authorList>
            <person name="Yamamoto T.G."/>
            <person name="Watanabe S."/>
            <person name="Essex A."/>
            <person name="Kitagawa R."/>
        </authorList>
    </citation>
    <scope>FUNCTION</scope>
    <scope>SUBCELLULAR LOCATION</scope>
</reference>
<reference key="6">
    <citation type="journal article" date="2009" name="Mol. Biol. Cell">
        <title>Systematic analysis in Caenorhabditis elegans reveals that the spindle checkpoint is composed of two largely independent branches.</title>
        <authorList>
            <person name="Essex A."/>
            <person name="Dammermann A."/>
            <person name="Lewellyn L."/>
            <person name="Oegema K."/>
            <person name="Desai A."/>
        </authorList>
    </citation>
    <scope>FUNCTION</scope>
</reference>
<reference key="7">
    <citation type="journal article" date="2009" name="PLoS ONE">
        <title>The function of a spindle checkpoint gene bub-1 in C. elegans development.</title>
        <authorList>
            <person name="Wang X."/>
            <person name="Liu M."/>
            <person name="Li W."/>
            <person name="Suh C.D."/>
            <person name="Zhu Z."/>
            <person name="Jin Y."/>
            <person name="Fan Q."/>
        </authorList>
    </citation>
    <scope>FUNCTION</scope>
    <scope>SUBCELLULAR LOCATION</scope>
    <scope>DEVELOPMENTAL STAGE</scope>
</reference>
<reference key="8">
    <citation type="journal article" date="2010" name="Nat. Cell Biol.">
        <title>A kinetochore-independent mechanism drives anaphase chromosome separation during acentrosomal meiosis.</title>
        <authorList>
            <person name="Dumont J."/>
            <person name="Oegema K."/>
            <person name="Desai A."/>
        </authorList>
    </citation>
    <scope>FUNCTION</scope>
    <scope>SUBCELLULAR LOCATION</scope>
    <scope>DISRUPTION PHENOTYPE</scope>
</reference>
<reference key="9">
    <citation type="journal article" date="2014" name="J. Cell Biol.">
        <title>A Bub1-Mad1 interaction targets the Mad1-Mad2 complex to unattached kinetochores to initiate the spindle checkpoint.</title>
        <authorList>
            <person name="Moyle M.W."/>
            <person name="Kim T."/>
            <person name="Hattersley N."/>
            <person name="Espeut J."/>
            <person name="Cheerambathur D.K."/>
            <person name="Oegema K."/>
            <person name="Desai A."/>
        </authorList>
    </citation>
    <scope>FUNCTION</scope>
    <scope>CATALYTIC ACTIVITY</scope>
    <scope>INTERACTION WITH MDF-1</scope>
    <scope>INTERACTION WITH BUB-3</scope>
    <scope>SUBCELLULAR LOCATION</scope>
    <scope>MUTAGENESIS OF LYS-718; LEU-777; ASN-781; ASP-814 AND ASP-847</scope>
</reference>
<reference key="10">
    <citation type="journal article" date="2015" name="J. Cell Biol.">
        <title>Kinetochore-localized BUB-1/BUB-3 complex promotes anaphase onset in C. elegans.</title>
        <authorList>
            <person name="Kim T."/>
            <person name="Moyle M.W."/>
            <person name="Lara-Gonzalez P."/>
            <person name="De Groot C."/>
            <person name="Oegema K."/>
            <person name="Desai A."/>
        </authorList>
    </citation>
    <scope>FUNCTION</scope>
    <scope>INTERACTION WITH BUB-3</scope>
    <scope>SUBCELLULAR LOCATION</scope>
    <scope>DISRUPTION PHENOTYPE</scope>
</reference>
<gene>
    <name evidence="17" type="primary">bub-1</name>
    <name evidence="17" type="ORF">R06C7.8</name>
</gene>
<protein>
    <recommendedName>
        <fullName evidence="1">Mitotic checkpoint serine/threonine-protein kinase bub-1</fullName>
        <ecNumber evidence="11">2.7.11.1</ecNumber>
    </recommendedName>
    <alternativeName>
        <fullName evidence="13">Budding uninhibited by benzimidazole 1</fullName>
    </alternativeName>
</protein>
<organism evidence="16">
    <name type="scientific">Caenorhabditis elegans</name>
    <dbReference type="NCBI Taxonomy" id="6239"/>
    <lineage>
        <taxon>Eukaryota</taxon>
        <taxon>Metazoa</taxon>
        <taxon>Ecdysozoa</taxon>
        <taxon>Nematoda</taxon>
        <taxon>Chromadorea</taxon>
        <taxon>Rhabditida</taxon>
        <taxon>Rhabditina</taxon>
        <taxon>Rhabditomorpha</taxon>
        <taxon>Rhabditoidea</taxon>
        <taxon>Rhabditidae</taxon>
        <taxon>Peloderinae</taxon>
        <taxon>Caenorhabditis</taxon>
    </lineage>
</organism>
<proteinExistence type="evidence at protein level"/>
<feature type="chain" id="PRO_0000433016" description="Mitotic checkpoint serine/threonine-protein kinase bub-1">
    <location>
        <begin position="1"/>
        <end position="987"/>
    </location>
</feature>
<feature type="domain" description="Protein kinase" evidence="2">
    <location>
        <begin position="690"/>
        <end position="987"/>
    </location>
</feature>
<feature type="region of interest" description="Disordered" evidence="3">
    <location>
        <begin position="278"/>
        <end position="385"/>
    </location>
</feature>
<feature type="region of interest" description="Disordered" evidence="3">
    <location>
        <begin position="574"/>
        <end position="599"/>
    </location>
</feature>
<feature type="compositionally biased region" description="Basic and acidic residues" evidence="3">
    <location>
        <begin position="350"/>
        <end position="364"/>
    </location>
</feature>
<feature type="compositionally biased region" description="Low complexity" evidence="3">
    <location>
        <begin position="368"/>
        <end position="380"/>
    </location>
</feature>
<feature type="compositionally biased region" description="Polar residues" evidence="3">
    <location>
        <begin position="575"/>
        <end position="587"/>
    </location>
</feature>
<feature type="compositionally biased region" description="Basic and acidic residues" evidence="3">
    <location>
        <begin position="588"/>
        <end position="599"/>
    </location>
</feature>
<feature type="active site" description="Proton acceptor" evidence="2">
    <location>
        <position position="814"/>
    </location>
</feature>
<feature type="binding site" evidence="2">
    <location>
        <begin position="696"/>
        <end position="704"/>
    </location>
    <ligand>
        <name>ATP</name>
        <dbReference type="ChEBI" id="CHEBI:30616"/>
    </ligand>
</feature>
<feature type="binding site" evidence="2">
    <location>
        <position position="718"/>
    </location>
    <ligand>
        <name>ATP</name>
        <dbReference type="ChEBI" id="CHEBI:30616"/>
    </ligand>
</feature>
<feature type="mutagenesis site" description="No effect on embryo viability, severe loss of mdf-1 recruitment to unattached kinetochores and probably loss of kinase activity; when associated with N-847." evidence="11">
    <original>K</original>
    <variation>R</variation>
    <location>
        <position position="718"/>
    </location>
</feature>
<feature type="mutagenesis site" description="Loss of interaction with mdf-1 but not with bub-3. No effect on embryo viability and severe loss of mdf-1 recruitment to unattached kinetochores; when associated with K-781." evidence="11">
    <original>L</original>
    <variation>K</variation>
    <location>
        <position position="777"/>
    </location>
</feature>
<feature type="mutagenesis site" description="Loss of interaction with mdf-1 but not with bub-3. No effect on embryo viability and severe loss of mdf-1 recruitment to unattached kinetochores; when associated with K-777." evidence="11">
    <original>N</original>
    <variation>K</variation>
    <location>
        <position position="781"/>
    </location>
</feature>
<feature type="mutagenesis site" description="Loss of activity. No effect on embryo viability and mdf-1 recruitment to unattached kinetochores." evidence="11">
    <original>D</original>
    <variation>N</variation>
    <location>
        <position position="814"/>
    </location>
</feature>
<feature type="mutagenesis site" description="No effect on embryo viability, severe loss of mdf-1 recruitment to unattached kinetochores and probably loss of kinase activity; when associated with N-718." evidence="11">
    <original>D</original>
    <variation>N</variation>
    <location>
        <position position="847"/>
    </location>
</feature>
<name>BUB1_CAEEL</name>
<comment type="function">
    <text evidence="6 8 9 10 11 12">Serine/threonine-protein kinase essential for spindle-assembly checkpoint signaling. Plays a key role in the recruitment of the checkpoint proteins bub-3, mdf-1 and mdf-2 to unattached kinetochores (PubMed:18936247, PubMed:19109417, PubMed:24567362, PubMed:25987605). mdf-1 recruitment is independent of bub-1 kinase activity (PubMed:24567362). Has a role in the correct kinetochore localization of the spindly-like protein spdl-1 (PubMed:18765790). In addition, during meiotic anaphase I, controls the recruitment of hcp-1/2 and klp-19 to the ring-shaped domain formed between chromosomes (PubMed:20729837). Involved in chromosome alignment, chromosome homolog segregation and spindle assembly (PubMed:20729837, PubMed:25987605). In association with bub-3 at the kinetochore region of chromosomes, promotes the onset on anaphase independently from spindle checkpoint signaling and promotes the formation of stable end-on bipolar attachments of chromosomes (PubMed:25987605). Plays a role in nuclear envelope breakdown (PubMed:19109417). Required maternally during embryogenesis and in the zygote for the postembryonic development of several tissues including ventral cord neurons, gonad, intestine and seam cells (PubMed:19526056).</text>
</comment>
<comment type="catalytic activity">
    <reaction evidence="11">
        <text>L-seryl-[protein] + ATP = O-phospho-L-seryl-[protein] + ADP + H(+)</text>
        <dbReference type="Rhea" id="RHEA:17989"/>
        <dbReference type="Rhea" id="RHEA-COMP:9863"/>
        <dbReference type="Rhea" id="RHEA-COMP:11604"/>
        <dbReference type="ChEBI" id="CHEBI:15378"/>
        <dbReference type="ChEBI" id="CHEBI:29999"/>
        <dbReference type="ChEBI" id="CHEBI:30616"/>
        <dbReference type="ChEBI" id="CHEBI:83421"/>
        <dbReference type="ChEBI" id="CHEBI:456216"/>
        <dbReference type="EC" id="2.7.11.1"/>
    </reaction>
</comment>
<comment type="catalytic activity">
    <reaction evidence="11">
        <text>L-threonyl-[protein] + ATP = O-phospho-L-threonyl-[protein] + ADP + H(+)</text>
        <dbReference type="Rhea" id="RHEA:46608"/>
        <dbReference type="Rhea" id="RHEA-COMP:11060"/>
        <dbReference type="Rhea" id="RHEA-COMP:11605"/>
        <dbReference type="ChEBI" id="CHEBI:15378"/>
        <dbReference type="ChEBI" id="CHEBI:30013"/>
        <dbReference type="ChEBI" id="CHEBI:30616"/>
        <dbReference type="ChEBI" id="CHEBI:61977"/>
        <dbReference type="ChEBI" id="CHEBI:456216"/>
        <dbReference type="EC" id="2.7.11.1"/>
    </reaction>
</comment>
<comment type="subunit">
    <text evidence="11 12 15">Interacts (via kinase domain) with mdf-1 (via coiled coil domain); the interaction recruits mdf-1 to unattached kinetochores during mitosis and between homologous chromosomes in early anaphase of meiosis I (PubMed:24567362). May interact with bub-3; for localization at the kinetochore and the onset of anaphase (PubMed:24567362, PubMed:25987605).</text>
</comment>
<comment type="subcellular location">
    <subcellularLocation>
        <location evidence="10">Cytoplasm</location>
        <location evidence="10">Cell cortex</location>
    </subcellularLocation>
    <subcellularLocation>
        <location evidence="9">Nucleus</location>
    </subcellularLocation>
    <subcellularLocation>
        <location evidence="5 6 7 10 11 12">Chromosome</location>
        <location evidence="5 6 7 10 11 12">Centromere</location>
        <location evidence="5 6 7 10 11 12">Kinetochore</location>
    </subcellularLocation>
    <text evidence="4 5 10 11 12">Localizes to kinetochores during prophase and metaphase. In metaphase, also localizes to a matrix-like structure around the spindle (PubMed:11402065). In anaphase, localizes only to unattached kinetochores which is kln-1-dependent (PubMed:11402065, PubMed:24567362). Also localizes in a ring-shaped domain between kinetochores, during anaphase of meiosis I which is air-2 and kln-1-dependent and between sister chromatids during meiosis II, which is kln-1-independent (PubMed:20729837). Localization to the kinetochore is dependent on bub-3 and on knl-2 (PubMed:17339379, PubMed:25987605).</text>
</comment>
<comment type="developmental stage">
    <text evidence="9">Expressed throughout embryogenesis mainly in dividing cells.</text>
</comment>
<comment type="disruption phenotype">
    <text evidence="6 10 12">Embryonic lethal (PubMed:25987605). RNAi-mediated knockdown in oocytes results in aberrant homologous chromosome segregation during meiosis due to severe pre-anaphase spindle defects characterized by disorganized microtubule bundles (PubMed:20729837). Delays in the processes leading up to exit from mitosis including delayed activation of separase, which results in a delay in the separation of sister chromatids, delayed cytokinesis onset and delayed chromosome decondensation (PubMed:25987605). These culminate in a delay in the onset of anaphase with a 50% increase in the interval between nuclear envelope breakdown and the onset of anaphase during embryogenesis (PubMed:25987605). Reduced bub-3 localization at the kinetochore region of chromosomes in embryos, but without a reduction in bub-3 protein (PubMed:25987605). In addition there is reduced localization of the spindly-like protein spdl-1 to kinetochores (PubMed:18765790).</text>
</comment>
<comment type="similarity">
    <text evidence="14">Belongs to the protein kinase superfamily. Ser/Thr protein kinase family. BUB1 subfamily.</text>
</comment>
<dbReference type="EC" id="2.7.11.1" evidence="11"/>
<dbReference type="EMBL" id="BX284601">
    <property type="protein sequence ID" value="CAA95845.1"/>
    <property type="molecule type" value="Genomic_DNA"/>
</dbReference>
<dbReference type="PIR" id="T23971">
    <property type="entry name" value="T23971"/>
</dbReference>
<dbReference type="RefSeq" id="NP_492051.1">
    <property type="nucleotide sequence ID" value="NM_059650.8"/>
</dbReference>
<dbReference type="SMR" id="Q21776"/>
<dbReference type="ComplexPortal" id="CPX-400">
    <property type="entry name" value="Bub-1-Bub-3 complex"/>
</dbReference>
<dbReference type="ComplexPortal" id="CPX-401">
    <property type="entry name" value="Mitotic checkpoint complex, Mad-1-Mad-2-Bub-1-Bub-3 subcomplex"/>
</dbReference>
<dbReference type="DIP" id="DIP-27465N"/>
<dbReference type="FunCoup" id="Q21776">
    <property type="interactions" value="80"/>
</dbReference>
<dbReference type="IntAct" id="Q21776">
    <property type="interactions" value="4"/>
</dbReference>
<dbReference type="STRING" id="6239.R06C7.8.1"/>
<dbReference type="iPTMnet" id="Q21776"/>
<dbReference type="PaxDb" id="6239-R06C7.8"/>
<dbReference type="PeptideAtlas" id="Q21776"/>
<dbReference type="EnsemblMetazoa" id="R06C7.8.1">
    <property type="protein sequence ID" value="R06C7.8.1"/>
    <property type="gene ID" value="WBGene00000275"/>
</dbReference>
<dbReference type="GeneID" id="172468"/>
<dbReference type="KEGG" id="cel:CELE_R06C7.8"/>
<dbReference type="UCSC" id="R06C7.8">
    <property type="organism name" value="c. elegans"/>
</dbReference>
<dbReference type="AGR" id="WB:WBGene00000275"/>
<dbReference type="CTD" id="172468"/>
<dbReference type="WormBase" id="R06C7.8">
    <property type="protein sequence ID" value="CE06251"/>
    <property type="gene ID" value="WBGene00000275"/>
    <property type="gene designation" value="bub-1"/>
</dbReference>
<dbReference type="eggNOG" id="KOG1166">
    <property type="taxonomic scope" value="Eukaryota"/>
</dbReference>
<dbReference type="GeneTree" id="ENSGT00940000167713"/>
<dbReference type="HOGENOM" id="CLU_012854_0_0_1"/>
<dbReference type="InParanoid" id="Q21776"/>
<dbReference type="OMA" id="ADWCIMQ"/>
<dbReference type="OrthoDB" id="248495at2759"/>
<dbReference type="Reactome" id="R-CEL-141430">
    <property type="pathway name" value="Inactivation of APC/C via direct inhibition of the APC/C complex"/>
</dbReference>
<dbReference type="PRO" id="PR:Q21776"/>
<dbReference type="Proteomes" id="UP000001940">
    <property type="component" value="Chromosome I"/>
</dbReference>
<dbReference type="Bgee" id="WBGene00000275">
    <property type="expression patterns" value="Expressed in embryo and 4 other cell types or tissues"/>
</dbReference>
<dbReference type="GO" id="GO:1990298">
    <property type="term" value="C:bub1-bub3 complex"/>
    <property type="evidence" value="ECO:0000353"/>
    <property type="project" value="ComplexPortal"/>
</dbReference>
<dbReference type="GO" id="GO:0005938">
    <property type="term" value="C:cell cortex"/>
    <property type="evidence" value="ECO:0007669"/>
    <property type="project" value="UniProtKB-SubCell"/>
</dbReference>
<dbReference type="GO" id="GO:0000776">
    <property type="term" value="C:kinetochore"/>
    <property type="evidence" value="ECO:0000314"/>
    <property type="project" value="UniProtKB"/>
</dbReference>
<dbReference type="GO" id="GO:0005634">
    <property type="term" value="C:nucleus"/>
    <property type="evidence" value="ECO:0000318"/>
    <property type="project" value="GO_Central"/>
</dbReference>
<dbReference type="GO" id="GO:0000940">
    <property type="term" value="C:outer kinetochore"/>
    <property type="evidence" value="ECO:0000250"/>
    <property type="project" value="UniProtKB"/>
</dbReference>
<dbReference type="GO" id="GO:0005524">
    <property type="term" value="F:ATP binding"/>
    <property type="evidence" value="ECO:0007669"/>
    <property type="project" value="UniProtKB-KW"/>
</dbReference>
<dbReference type="GO" id="GO:0043515">
    <property type="term" value="F:kinetochore binding"/>
    <property type="evidence" value="ECO:0000314"/>
    <property type="project" value="UniProtKB"/>
</dbReference>
<dbReference type="GO" id="GO:0004672">
    <property type="term" value="F:protein kinase activity"/>
    <property type="evidence" value="ECO:0000250"/>
    <property type="project" value="UniProtKB"/>
</dbReference>
<dbReference type="GO" id="GO:0106310">
    <property type="term" value="F:protein serine kinase activity"/>
    <property type="evidence" value="ECO:0007669"/>
    <property type="project" value="RHEA"/>
</dbReference>
<dbReference type="GO" id="GO:0004674">
    <property type="term" value="F:protein serine/threonine kinase activity"/>
    <property type="evidence" value="ECO:0007669"/>
    <property type="project" value="UniProtKB-KW"/>
</dbReference>
<dbReference type="GO" id="GO:0051316">
    <property type="term" value="P:attachment of meiotic spindle microtubules to kinetochore"/>
    <property type="evidence" value="ECO:0000315"/>
    <property type="project" value="UniProtKB"/>
</dbReference>
<dbReference type="GO" id="GO:1990299">
    <property type="term" value="P:Bub1-Bub3 complex localization to kinetochore"/>
    <property type="evidence" value="ECO:0000314"/>
    <property type="project" value="ComplexPortal"/>
</dbReference>
<dbReference type="GO" id="GO:0051301">
    <property type="term" value="P:cell division"/>
    <property type="evidence" value="ECO:0000315"/>
    <property type="project" value="UniProtKB"/>
</dbReference>
<dbReference type="GO" id="GO:0048598">
    <property type="term" value="P:embryonic morphogenesis"/>
    <property type="evidence" value="ECO:0000315"/>
    <property type="project" value="UniProtKB"/>
</dbReference>
<dbReference type="GO" id="GO:0008406">
    <property type="term" value="P:gonad development"/>
    <property type="evidence" value="ECO:0000315"/>
    <property type="project" value="UniProtKB"/>
</dbReference>
<dbReference type="GO" id="GO:0051307">
    <property type="term" value="P:meiotic chromosome separation"/>
    <property type="evidence" value="ECO:0000315"/>
    <property type="project" value="UniProtKB"/>
</dbReference>
<dbReference type="GO" id="GO:0051754">
    <property type="term" value="P:meiotic sister chromatid cohesion, centromeric"/>
    <property type="evidence" value="ECO:0000318"/>
    <property type="project" value="GO_Central"/>
</dbReference>
<dbReference type="GO" id="GO:0051257">
    <property type="term" value="P:meiotic spindle midzone assembly"/>
    <property type="evidence" value="ECO:0000315"/>
    <property type="project" value="UniProtKB"/>
</dbReference>
<dbReference type="GO" id="GO:0000212">
    <property type="term" value="P:meiotic spindle organization"/>
    <property type="evidence" value="ECO:0000315"/>
    <property type="project" value="UniProtKB"/>
</dbReference>
<dbReference type="GO" id="GO:0007094">
    <property type="term" value="P:mitotic spindle assembly checkpoint signaling"/>
    <property type="evidence" value="ECO:0000314"/>
    <property type="project" value="ComplexPortal"/>
</dbReference>
<dbReference type="GO" id="GO:0048666">
    <property type="term" value="P:neuron development"/>
    <property type="evidence" value="ECO:0000315"/>
    <property type="project" value="UniProtKB"/>
</dbReference>
<dbReference type="GO" id="GO:0000280">
    <property type="term" value="P:nuclear division"/>
    <property type="evidence" value="ECO:0000315"/>
    <property type="project" value="UniProtKB"/>
</dbReference>
<dbReference type="GO" id="GO:0110039">
    <property type="term" value="P:positive regulation of nematode male tail tip morphogenesis"/>
    <property type="evidence" value="ECO:0000315"/>
    <property type="project" value="UniProtKB"/>
</dbReference>
<dbReference type="GO" id="GO:1905342">
    <property type="term" value="P:positive regulation of protein localization to kinetochore"/>
    <property type="evidence" value="ECO:0000315"/>
    <property type="project" value="UniProtKB"/>
</dbReference>
<dbReference type="GO" id="GO:0034501">
    <property type="term" value="P:protein localization to kinetochore"/>
    <property type="evidence" value="ECO:0000315"/>
    <property type="project" value="UniProtKB"/>
</dbReference>
<dbReference type="GO" id="GO:1903394">
    <property type="term" value="P:protein localization to kinetochore involved in kinetochore assembly"/>
    <property type="evidence" value="ECO:0000315"/>
    <property type="project" value="UniProtKB"/>
</dbReference>
<dbReference type="CDD" id="cd13981">
    <property type="entry name" value="STKc_Bub1_BubR1"/>
    <property type="match status" value="1"/>
</dbReference>
<dbReference type="FunFam" id="1.25.40.430:FF:000011">
    <property type="entry name" value="Mitotic checkpoint serine/threonine-protein kinase bub-1"/>
    <property type="match status" value="1"/>
</dbReference>
<dbReference type="FunFam" id="1.10.510.10:FF:001544">
    <property type="entry name" value="Protein CBG12075"/>
    <property type="match status" value="1"/>
</dbReference>
<dbReference type="Gene3D" id="1.25.40.430">
    <property type="match status" value="1"/>
</dbReference>
<dbReference type="Gene3D" id="1.10.510.10">
    <property type="entry name" value="Transferase(Phosphotransferase) domain 1"/>
    <property type="match status" value="1"/>
</dbReference>
<dbReference type="InterPro" id="IPR015661">
    <property type="entry name" value="Bub1/Mad3"/>
</dbReference>
<dbReference type="InterPro" id="IPR011009">
    <property type="entry name" value="Kinase-like_dom_sf"/>
</dbReference>
<dbReference type="InterPro" id="IPR000719">
    <property type="entry name" value="Prot_kinase_dom"/>
</dbReference>
<dbReference type="InterPro" id="IPR017441">
    <property type="entry name" value="Protein_kinase_ATP_BS"/>
</dbReference>
<dbReference type="InterPro" id="IPR008271">
    <property type="entry name" value="Ser/Thr_kinase_AS"/>
</dbReference>
<dbReference type="PANTHER" id="PTHR14030:SF4">
    <property type="entry name" value="BUB1 KINASE, ISOFORM A-RELATED"/>
    <property type="match status" value="1"/>
</dbReference>
<dbReference type="PANTHER" id="PTHR14030">
    <property type="entry name" value="MITOTIC CHECKPOINT SERINE/THREONINE-PROTEIN KINASE BUB1"/>
    <property type="match status" value="1"/>
</dbReference>
<dbReference type="Pfam" id="PF00069">
    <property type="entry name" value="Pkinase"/>
    <property type="match status" value="1"/>
</dbReference>
<dbReference type="SMART" id="SM00220">
    <property type="entry name" value="S_TKc"/>
    <property type="match status" value="1"/>
</dbReference>
<dbReference type="SUPFAM" id="SSF56112">
    <property type="entry name" value="Protein kinase-like (PK-like)"/>
    <property type="match status" value="1"/>
</dbReference>
<dbReference type="PROSITE" id="PS00107">
    <property type="entry name" value="PROTEIN_KINASE_ATP"/>
    <property type="match status" value="1"/>
</dbReference>
<dbReference type="PROSITE" id="PS50011">
    <property type="entry name" value="PROTEIN_KINASE_DOM"/>
    <property type="match status" value="1"/>
</dbReference>
<dbReference type="PROSITE" id="PS00108">
    <property type="entry name" value="PROTEIN_KINASE_ST"/>
    <property type="match status" value="1"/>
</dbReference>
<keyword id="KW-0067">ATP-binding</keyword>
<keyword id="KW-0131">Cell cycle</keyword>
<keyword id="KW-0132">Cell division</keyword>
<keyword id="KW-0137">Centromere</keyword>
<keyword id="KW-0158">Chromosome</keyword>
<keyword id="KW-0963">Cytoplasm</keyword>
<keyword id="KW-0217">Developmental protein</keyword>
<keyword id="KW-0418">Kinase</keyword>
<keyword id="KW-0995">Kinetochore</keyword>
<keyword id="KW-0469">Meiosis</keyword>
<keyword id="KW-0498">Mitosis</keyword>
<keyword id="KW-0547">Nucleotide-binding</keyword>
<keyword id="KW-0539">Nucleus</keyword>
<keyword id="KW-1185">Reference proteome</keyword>
<keyword id="KW-0723">Serine/threonine-protein kinase</keyword>
<keyword id="KW-0808">Transferase</keyword>
<accession>Q21776</accession>
<evidence type="ECO:0000250" key="1">
    <source>
        <dbReference type="UniProtKB" id="O43683"/>
    </source>
</evidence>
<evidence type="ECO:0000255" key="2">
    <source>
        <dbReference type="PROSITE-ProRule" id="PRU00159"/>
    </source>
</evidence>
<evidence type="ECO:0000256" key="3">
    <source>
        <dbReference type="SAM" id="MobiDB-lite"/>
    </source>
</evidence>
<evidence type="ECO:0000269" key="4">
    <source>
    </source>
</evidence>
<evidence type="ECO:0000269" key="5">
    <source>
    </source>
</evidence>
<evidence type="ECO:0000269" key="6">
    <source>
    </source>
</evidence>
<evidence type="ECO:0000269" key="7">
    <source>
    </source>
</evidence>
<evidence type="ECO:0000269" key="8">
    <source>
    </source>
</evidence>
<evidence type="ECO:0000269" key="9">
    <source>
    </source>
</evidence>
<evidence type="ECO:0000269" key="10">
    <source>
    </source>
</evidence>
<evidence type="ECO:0000269" key="11">
    <source>
    </source>
</evidence>
<evidence type="ECO:0000269" key="12">
    <source>
    </source>
</evidence>
<evidence type="ECO:0000303" key="13">
    <source>
    </source>
</evidence>
<evidence type="ECO:0000305" key="14"/>
<evidence type="ECO:0000305" key="15">
    <source>
    </source>
</evidence>
<evidence type="ECO:0000312" key="16">
    <source>
        <dbReference type="Proteomes" id="UP000001940"/>
    </source>
</evidence>
<evidence type="ECO:0000312" key="17">
    <source>
        <dbReference type="WormBase" id="R06C7.8"/>
    </source>
</evidence>